<protein>
    <recommendedName>
        <fullName>Ankyrin repeat domain-containing protein 53</fullName>
    </recommendedName>
</protein>
<feature type="chain" id="PRO_0000320070" description="Ankyrin repeat domain-containing protein 53">
    <location>
        <begin position="1"/>
        <end position="497"/>
    </location>
</feature>
<feature type="repeat" description="ANK 1">
    <location>
        <begin position="110"/>
        <end position="140"/>
    </location>
</feature>
<feature type="repeat" description="ANK 2">
    <location>
        <begin position="144"/>
        <end position="177"/>
    </location>
</feature>
<feature type="repeat" description="ANK 3">
    <location>
        <begin position="181"/>
        <end position="210"/>
    </location>
</feature>
<feature type="region of interest" description="Disordered" evidence="3">
    <location>
        <begin position="1"/>
        <end position="65"/>
    </location>
</feature>
<feature type="coiled-coil region" evidence="2">
    <location>
        <begin position="239"/>
        <end position="264"/>
    </location>
</feature>
<feature type="compositionally biased region" description="Basic residues" evidence="3">
    <location>
        <begin position="1"/>
        <end position="10"/>
    </location>
</feature>
<feature type="compositionally biased region" description="Low complexity" evidence="3">
    <location>
        <begin position="12"/>
        <end position="27"/>
    </location>
</feature>
<feature type="compositionally biased region" description="Basic and acidic residues" evidence="3">
    <location>
        <begin position="28"/>
        <end position="39"/>
    </location>
</feature>
<feature type="sequence conflict" description="In Ref. 1; BAE21510." evidence="4" ref="1">
    <original>D</original>
    <variation>N</variation>
    <location>
        <position position="220"/>
    </location>
</feature>
<proteinExistence type="evidence at transcript level"/>
<sequence length="497" mass="56738">MRRPSRRRSKASTPPRSHTTPRRTGPSDSRRRPGTKEQPRPSVQGGTRQAEHDLKVSSPNSESSQYSTSELWSHKVIANYSELFAASVGNVDWLRFCVNPERKEIIVDDKGFTAIHFAAQKCQLSCLKVLIEEYKYPVDLPTNKGQTPLHLVIHKNNKSDILPCIDYLLKKGAAINSQTYNGSTPLHLASCNGLLGCIKLLVQSGANVHARDATGFKPIDYCRLWNHRTCARFLKDVMWKHDKKVLAQEMEKLRTLKEKLTILEYHYLVEYQKEHQILREAHFRKWLQNKVLAQTLGSADSKQKAGVQPWSLASNTLRCPITESLHYPSVEAQLKNLPSPVVPPKPIYKQTTISRPKLWNYSANPARSPITNIGHPQNIRLGVHPEPYKEHDFRRFLEVTRNKHGGACLRTVDRQLVTPVPQLPFEMMVRVLYPGTQPYRMKVPQGLYPRDILKVPEKRHVGDTCSNTMAMTLRETFDKPFLDSLEVCRTRVAPPSK</sequence>
<keyword id="KW-0040">ANK repeat</keyword>
<keyword id="KW-0131">Cell cycle</keyword>
<keyword id="KW-0132">Cell division</keyword>
<keyword id="KW-0175">Coiled coil</keyword>
<keyword id="KW-0963">Cytoplasm</keyword>
<keyword id="KW-0206">Cytoskeleton</keyword>
<keyword id="KW-0498">Mitosis</keyword>
<keyword id="KW-0597">Phosphoprotein</keyword>
<keyword id="KW-1185">Reference proteome</keyword>
<keyword id="KW-0677">Repeat</keyword>
<organism>
    <name type="scientific">Mus musculus</name>
    <name type="common">Mouse</name>
    <dbReference type="NCBI Taxonomy" id="10090"/>
    <lineage>
        <taxon>Eukaryota</taxon>
        <taxon>Metazoa</taxon>
        <taxon>Chordata</taxon>
        <taxon>Craniata</taxon>
        <taxon>Vertebrata</taxon>
        <taxon>Euteleostomi</taxon>
        <taxon>Mammalia</taxon>
        <taxon>Eutheria</taxon>
        <taxon>Euarchontoglires</taxon>
        <taxon>Glires</taxon>
        <taxon>Rodentia</taxon>
        <taxon>Myomorpha</taxon>
        <taxon>Muroidea</taxon>
        <taxon>Muridae</taxon>
        <taxon>Murinae</taxon>
        <taxon>Mus</taxon>
        <taxon>Mus</taxon>
    </lineage>
</organism>
<reference key="1">
    <citation type="journal article" date="2005" name="Science">
        <title>The transcriptional landscape of the mammalian genome.</title>
        <authorList>
            <person name="Carninci P."/>
            <person name="Kasukawa T."/>
            <person name="Katayama S."/>
            <person name="Gough J."/>
            <person name="Frith M.C."/>
            <person name="Maeda N."/>
            <person name="Oyama R."/>
            <person name="Ravasi T."/>
            <person name="Lenhard B."/>
            <person name="Wells C."/>
            <person name="Kodzius R."/>
            <person name="Shimokawa K."/>
            <person name="Bajic V.B."/>
            <person name="Brenner S.E."/>
            <person name="Batalov S."/>
            <person name="Forrest A.R."/>
            <person name="Zavolan M."/>
            <person name="Davis M.J."/>
            <person name="Wilming L.G."/>
            <person name="Aidinis V."/>
            <person name="Allen J.E."/>
            <person name="Ambesi-Impiombato A."/>
            <person name="Apweiler R."/>
            <person name="Aturaliya R.N."/>
            <person name="Bailey T.L."/>
            <person name="Bansal M."/>
            <person name="Baxter L."/>
            <person name="Beisel K.W."/>
            <person name="Bersano T."/>
            <person name="Bono H."/>
            <person name="Chalk A.M."/>
            <person name="Chiu K.P."/>
            <person name="Choudhary V."/>
            <person name="Christoffels A."/>
            <person name="Clutterbuck D.R."/>
            <person name="Crowe M.L."/>
            <person name="Dalla E."/>
            <person name="Dalrymple B.P."/>
            <person name="de Bono B."/>
            <person name="Della Gatta G."/>
            <person name="di Bernardo D."/>
            <person name="Down T."/>
            <person name="Engstrom P."/>
            <person name="Fagiolini M."/>
            <person name="Faulkner G."/>
            <person name="Fletcher C.F."/>
            <person name="Fukushima T."/>
            <person name="Furuno M."/>
            <person name="Futaki S."/>
            <person name="Gariboldi M."/>
            <person name="Georgii-Hemming P."/>
            <person name="Gingeras T.R."/>
            <person name="Gojobori T."/>
            <person name="Green R.E."/>
            <person name="Gustincich S."/>
            <person name="Harbers M."/>
            <person name="Hayashi Y."/>
            <person name="Hensch T.K."/>
            <person name="Hirokawa N."/>
            <person name="Hill D."/>
            <person name="Huminiecki L."/>
            <person name="Iacono M."/>
            <person name="Ikeo K."/>
            <person name="Iwama A."/>
            <person name="Ishikawa T."/>
            <person name="Jakt M."/>
            <person name="Kanapin A."/>
            <person name="Katoh M."/>
            <person name="Kawasawa Y."/>
            <person name="Kelso J."/>
            <person name="Kitamura H."/>
            <person name="Kitano H."/>
            <person name="Kollias G."/>
            <person name="Krishnan S.P."/>
            <person name="Kruger A."/>
            <person name="Kummerfeld S.K."/>
            <person name="Kurochkin I.V."/>
            <person name="Lareau L.F."/>
            <person name="Lazarevic D."/>
            <person name="Lipovich L."/>
            <person name="Liu J."/>
            <person name="Liuni S."/>
            <person name="McWilliam S."/>
            <person name="Madan Babu M."/>
            <person name="Madera M."/>
            <person name="Marchionni L."/>
            <person name="Matsuda H."/>
            <person name="Matsuzawa S."/>
            <person name="Miki H."/>
            <person name="Mignone F."/>
            <person name="Miyake S."/>
            <person name="Morris K."/>
            <person name="Mottagui-Tabar S."/>
            <person name="Mulder N."/>
            <person name="Nakano N."/>
            <person name="Nakauchi H."/>
            <person name="Ng P."/>
            <person name="Nilsson R."/>
            <person name="Nishiguchi S."/>
            <person name="Nishikawa S."/>
            <person name="Nori F."/>
            <person name="Ohara O."/>
            <person name="Okazaki Y."/>
            <person name="Orlando V."/>
            <person name="Pang K.C."/>
            <person name="Pavan W.J."/>
            <person name="Pavesi G."/>
            <person name="Pesole G."/>
            <person name="Petrovsky N."/>
            <person name="Piazza S."/>
            <person name="Reed J."/>
            <person name="Reid J.F."/>
            <person name="Ring B.Z."/>
            <person name="Ringwald M."/>
            <person name="Rost B."/>
            <person name="Ruan Y."/>
            <person name="Salzberg S.L."/>
            <person name="Sandelin A."/>
            <person name="Schneider C."/>
            <person name="Schoenbach C."/>
            <person name="Sekiguchi K."/>
            <person name="Semple C.A."/>
            <person name="Seno S."/>
            <person name="Sessa L."/>
            <person name="Sheng Y."/>
            <person name="Shibata Y."/>
            <person name="Shimada H."/>
            <person name="Shimada K."/>
            <person name="Silva D."/>
            <person name="Sinclair B."/>
            <person name="Sperling S."/>
            <person name="Stupka E."/>
            <person name="Sugiura K."/>
            <person name="Sultana R."/>
            <person name="Takenaka Y."/>
            <person name="Taki K."/>
            <person name="Tammoja K."/>
            <person name="Tan S.L."/>
            <person name="Tang S."/>
            <person name="Taylor M.S."/>
            <person name="Tegner J."/>
            <person name="Teichmann S.A."/>
            <person name="Ueda H.R."/>
            <person name="van Nimwegen E."/>
            <person name="Verardo R."/>
            <person name="Wei C.L."/>
            <person name="Yagi K."/>
            <person name="Yamanishi H."/>
            <person name="Zabarovsky E."/>
            <person name="Zhu S."/>
            <person name="Zimmer A."/>
            <person name="Hide W."/>
            <person name="Bult C."/>
            <person name="Grimmond S.M."/>
            <person name="Teasdale R.D."/>
            <person name="Liu E.T."/>
            <person name="Brusic V."/>
            <person name="Quackenbush J."/>
            <person name="Wahlestedt C."/>
            <person name="Mattick J.S."/>
            <person name="Hume D.A."/>
            <person name="Kai C."/>
            <person name="Sasaki D."/>
            <person name="Tomaru Y."/>
            <person name="Fukuda S."/>
            <person name="Kanamori-Katayama M."/>
            <person name="Suzuki M."/>
            <person name="Aoki J."/>
            <person name="Arakawa T."/>
            <person name="Iida J."/>
            <person name="Imamura K."/>
            <person name="Itoh M."/>
            <person name="Kato T."/>
            <person name="Kawaji H."/>
            <person name="Kawagashira N."/>
            <person name="Kawashima T."/>
            <person name="Kojima M."/>
            <person name="Kondo S."/>
            <person name="Konno H."/>
            <person name="Nakano K."/>
            <person name="Ninomiya N."/>
            <person name="Nishio T."/>
            <person name="Okada M."/>
            <person name="Plessy C."/>
            <person name="Shibata K."/>
            <person name="Shiraki T."/>
            <person name="Suzuki S."/>
            <person name="Tagami M."/>
            <person name="Waki K."/>
            <person name="Watahiki A."/>
            <person name="Okamura-Oho Y."/>
            <person name="Suzuki H."/>
            <person name="Kawai J."/>
            <person name="Hayashizaki Y."/>
        </authorList>
    </citation>
    <scope>NUCLEOTIDE SEQUENCE [LARGE SCALE MRNA]</scope>
    <source>
        <strain>C57BL/6J</strain>
        <tissue>Testis</tissue>
    </source>
</reference>
<reference key="2">
    <citation type="journal article" date="2009" name="PLoS Biol.">
        <title>Lineage-specific biology revealed by a finished genome assembly of the mouse.</title>
        <authorList>
            <person name="Church D.M."/>
            <person name="Goodstadt L."/>
            <person name="Hillier L.W."/>
            <person name="Zody M.C."/>
            <person name="Goldstein S."/>
            <person name="She X."/>
            <person name="Bult C.J."/>
            <person name="Agarwala R."/>
            <person name="Cherry J.L."/>
            <person name="DiCuccio M."/>
            <person name="Hlavina W."/>
            <person name="Kapustin Y."/>
            <person name="Meric P."/>
            <person name="Maglott D."/>
            <person name="Birtle Z."/>
            <person name="Marques A.C."/>
            <person name="Graves T."/>
            <person name="Zhou S."/>
            <person name="Teague B."/>
            <person name="Potamousis K."/>
            <person name="Churas C."/>
            <person name="Place M."/>
            <person name="Herschleb J."/>
            <person name="Runnheim R."/>
            <person name="Forrest D."/>
            <person name="Amos-Landgraf J."/>
            <person name="Schwartz D.C."/>
            <person name="Cheng Z."/>
            <person name="Lindblad-Toh K."/>
            <person name="Eichler E.E."/>
            <person name="Ponting C.P."/>
        </authorList>
    </citation>
    <scope>NUCLEOTIDE SEQUENCE [LARGE SCALE GENOMIC DNA]</scope>
    <source>
        <strain>C57BL/6J</strain>
    </source>
</reference>
<name>ANR53_MOUSE</name>
<dbReference type="EMBL" id="AK133099">
    <property type="protein sequence ID" value="BAE21510.1"/>
    <property type="molecule type" value="mRNA"/>
</dbReference>
<dbReference type="EMBL" id="AC090647">
    <property type="status" value="NOT_ANNOTATED_CDS"/>
    <property type="molecule type" value="Genomic_DNA"/>
</dbReference>
<dbReference type="CCDS" id="CCDS20284.1"/>
<dbReference type="RefSeq" id="NP_083521.2">
    <property type="nucleotide sequence ID" value="NM_029245.3"/>
</dbReference>
<dbReference type="SMR" id="Q3V0J4"/>
<dbReference type="FunCoup" id="Q3V0J4">
    <property type="interactions" value="38"/>
</dbReference>
<dbReference type="STRING" id="10090.ENSMUSP00000014891"/>
<dbReference type="iPTMnet" id="Q3V0J4"/>
<dbReference type="PhosphoSitePlus" id="Q3V0J4"/>
<dbReference type="PaxDb" id="10090-ENSMUSP00000014891"/>
<dbReference type="ProteomicsDB" id="282003"/>
<dbReference type="Antibodypedia" id="53588">
    <property type="antibodies" value="182 antibodies from 17 providers"/>
</dbReference>
<dbReference type="Ensembl" id="ENSMUST00000014891.5">
    <property type="protein sequence ID" value="ENSMUSP00000014891.4"/>
    <property type="gene ID" value="ENSMUSG00000014747.7"/>
</dbReference>
<dbReference type="GeneID" id="75305"/>
<dbReference type="KEGG" id="mmu:75305"/>
<dbReference type="UCSC" id="uc009cod.1">
    <property type="organism name" value="mouse"/>
</dbReference>
<dbReference type="AGR" id="MGI:1922555"/>
<dbReference type="CTD" id="79998"/>
<dbReference type="MGI" id="MGI:1922555">
    <property type="gene designation" value="Ankrd53"/>
</dbReference>
<dbReference type="VEuPathDB" id="HostDB:ENSMUSG00000014747"/>
<dbReference type="eggNOG" id="KOG4177">
    <property type="taxonomic scope" value="Eukaryota"/>
</dbReference>
<dbReference type="GeneTree" id="ENSGT00390000005650"/>
<dbReference type="HOGENOM" id="CLU_038440_0_0_1"/>
<dbReference type="InParanoid" id="Q3V0J4"/>
<dbReference type="OMA" id="NHRICAR"/>
<dbReference type="OrthoDB" id="10254927at2759"/>
<dbReference type="PhylomeDB" id="Q3V0J4"/>
<dbReference type="TreeFam" id="TF351267"/>
<dbReference type="BioGRID-ORCS" id="75305">
    <property type="hits" value="3 hits in 76 CRISPR screens"/>
</dbReference>
<dbReference type="PRO" id="PR:Q3V0J4"/>
<dbReference type="Proteomes" id="UP000000589">
    <property type="component" value="Chromosome 6"/>
</dbReference>
<dbReference type="RNAct" id="Q3V0J4">
    <property type="molecule type" value="protein"/>
</dbReference>
<dbReference type="Bgee" id="ENSMUSG00000014747">
    <property type="expression patterns" value="Expressed in testis and 30 other cell types or tissues"/>
</dbReference>
<dbReference type="ExpressionAtlas" id="Q3V0J4">
    <property type="expression patterns" value="baseline and differential"/>
</dbReference>
<dbReference type="GO" id="GO:0005737">
    <property type="term" value="C:cytoplasm"/>
    <property type="evidence" value="ECO:0007669"/>
    <property type="project" value="UniProtKB-KW"/>
</dbReference>
<dbReference type="GO" id="GO:0005819">
    <property type="term" value="C:spindle"/>
    <property type="evidence" value="ECO:0000250"/>
    <property type="project" value="UniProtKB"/>
</dbReference>
<dbReference type="GO" id="GO:0000922">
    <property type="term" value="C:spindle pole"/>
    <property type="evidence" value="ECO:0000250"/>
    <property type="project" value="UniProtKB"/>
</dbReference>
<dbReference type="GO" id="GO:0051301">
    <property type="term" value="P:cell division"/>
    <property type="evidence" value="ECO:0007669"/>
    <property type="project" value="UniProtKB-KW"/>
</dbReference>
<dbReference type="GO" id="GO:0007080">
    <property type="term" value="P:mitotic metaphase chromosome alignment"/>
    <property type="evidence" value="ECO:0000250"/>
    <property type="project" value="UniProtKB"/>
</dbReference>
<dbReference type="GO" id="GO:0031116">
    <property type="term" value="P:positive regulation of microtubule polymerization"/>
    <property type="evidence" value="ECO:0000250"/>
    <property type="project" value="UniProtKB"/>
</dbReference>
<dbReference type="GO" id="GO:1902412">
    <property type="term" value="P:regulation of mitotic cytokinesis"/>
    <property type="evidence" value="ECO:0000250"/>
    <property type="project" value="UniProtKB"/>
</dbReference>
<dbReference type="GO" id="GO:0060236">
    <property type="term" value="P:regulation of mitotic spindle organization"/>
    <property type="evidence" value="ECO:0000250"/>
    <property type="project" value="UniProtKB"/>
</dbReference>
<dbReference type="Gene3D" id="1.25.40.20">
    <property type="entry name" value="Ankyrin repeat-containing domain"/>
    <property type="match status" value="1"/>
</dbReference>
<dbReference type="InterPro" id="IPR042335">
    <property type="entry name" value="ANKRD53"/>
</dbReference>
<dbReference type="InterPro" id="IPR002110">
    <property type="entry name" value="Ankyrin_rpt"/>
</dbReference>
<dbReference type="InterPro" id="IPR036770">
    <property type="entry name" value="Ankyrin_rpt-contain_sf"/>
</dbReference>
<dbReference type="PANTHER" id="PTHR24160">
    <property type="entry name" value="ANKYRIN REPEAT DOMAIN-CONTAINING PROTEIN 53"/>
    <property type="match status" value="1"/>
</dbReference>
<dbReference type="PANTHER" id="PTHR24160:SF1">
    <property type="entry name" value="ANKYRIN REPEAT DOMAIN-CONTAINING PROTEIN 53"/>
    <property type="match status" value="1"/>
</dbReference>
<dbReference type="Pfam" id="PF12796">
    <property type="entry name" value="Ank_2"/>
    <property type="match status" value="1"/>
</dbReference>
<dbReference type="SMART" id="SM00248">
    <property type="entry name" value="ANK"/>
    <property type="match status" value="3"/>
</dbReference>
<dbReference type="SUPFAM" id="SSF48403">
    <property type="entry name" value="Ankyrin repeat"/>
    <property type="match status" value="1"/>
</dbReference>
<dbReference type="PROSITE" id="PS50297">
    <property type="entry name" value="ANK_REP_REGION"/>
    <property type="match status" value="1"/>
</dbReference>
<dbReference type="PROSITE" id="PS50088">
    <property type="entry name" value="ANK_REPEAT"/>
    <property type="match status" value="2"/>
</dbReference>
<evidence type="ECO:0000250" key="1">
    <source>
        <dbReference type="UniProtKB" id="Q8N9V6"/>
    </source>
</evidence>
<evidence type="ECO:0000255" key="2"/>
<evidence type="ECO:0000256" key="3">
    <source>
        <dbReference type="SAM" id="MobiDB-lite"/>
    </source>
</evidence>
<evidence type="ECO:0000305" key="4"/>
<accession>Q3V0J4</accession>
<accession>E9QN79</accession>
<comment type="function">
    <text evidence="1">Required for normal progression through mitosis. Involved in chromosome alignment and cytokinesis via regulation of microtubules polymerization.</text>
</comment>
<comment type="subunit">
    <text evidence="1">Interacts with PSRC1; recruited by PSRC1 to the spindle during mitosis.</text>
</comment>
<comment type="subcellular location">
    <subcellularLocation>
        <location evidence="1">Cytoplasm</location>
        <location evidence="1">Cytoskeleton</location>
        <location evidence="1">Spindle</location>
    </subcellularLocation>
    <subcellularLocation>
        <location evidence="1">Cytoplasm</location>
        <location evidence="1">Cytoskeleton</location>
        <location evidence="1">Spindle pole</location>
    </subcellularLocation>
    <text evidence="1">Localizes at the spindle around the centrosome at prophase and prometaphase and at the spindle poles at metaphase and anaphase.</text>
</comment>
<comment type="PTM">
    <text evidence="1">Phosphorylated during mitosis.</text>
</comment>
<gene>
    <name type="primary">Ankrd53</name>
</gene>